<gene>
    <name type="primary">CYP7A1</name>
    <name type="synonym">CYP7</name>
</gene>
<keyword id="KW-0153">Cholesterol metabolism</keyword>
<keyword id="KW-0256">Endoplasmic reticulum</keyword>
<keyword id="KW-0349">Heme</keyword>
<keyword id="KW-0408">Iron</keyword>
<keyword id="KW-0443">Lipid metabolism</keyword>
<keyword id="KW-0472">Membrane</keyword>
<keyword id="KW-0479">Metal-binding</keyword>
<keyword id="KW-0492">Microsome</keyword>
<keyword id="KW-0503">Monooxygenase</keyword>
<keyword id="KW-0560">Oxidoreductase</keyword>
<keyword id="KW-0753">Steroid metabolism</keyword>
<keyword id="KW-1207">Sterol metabolism</keyword>
<feature type="chain" id="PRO_0000051900" description="Cholesterol 7-alpha-monooxygenase">
    <location>
        <begin position="1"/>
        <end position="504"/>
    </location>
</feature>
<feature type="binding site" description="axial binding residue" evidence="1">
    <location>
        <position position="444"/>
    </location>
    <ligand>
        <name>heme</name>
        <dbReference type="ChEBI" id="CHEBI:30413"/>
    </ligand>
    <ligandPart>
        <name>Fe</name>
        <dbReference type="ChEBI" id="CHEBI:18248"/>
    </ligandPart>
</feature>
<comment type="function">
    <text evidence="2">Catalyzes a rate-limiting step in cholesterol catabolism and bile acid biosynthesis by introducing a hydrophilic moiety at position 7 of cholesterol. Important for cholesterol homeostasis.</text>
</comment>
<comment type="catalytic activity">
    <reaction evidence="2">
        <text>cholesterol + reduced [NADPH--hemoprotein reductase] + O2 = 7alpha-hydroxycholesterol + oxidized [NADPH--hemoprotein reductase] + H2O + H(+)</text>
        <dbReference type="Rhea" id="RHEA:21812"/>
        <dbReference type="Rhea" id="RHEA-COMP:11964"/>
        <dbReference type="Rhea" id="RHEA-COMP:11965"/>
        <dbReference type="ChEBI" id="CHEBI:15377"/>
        <dbReference type="ChEBI" id="CHEBI:15378"/>
        <dbReference type="ChEBI" id="CHEBI:15379"/>
        <dbReference type="ChEBI" id="CHEBI:16113"/>
        <dbReference type="ChEBI" id="CHEBI:17500"/>
        <dbReference type="ChEBI" id="CHEBI:57618"/>
        <dbReference type="ChEBI" id="CHEBI:58210"/>
        <dbReference type="EC" id="1.14.14.23"/>
    </reaction>
</comment>
<comment type="cofactor">
    <cofactor evidence="1">
        <name>heme</name>
        <dbReference type="ChEBI" id="CHEBI:30413"/>
    </cofactor>
</comment>
<comment type="pathway">
    <text>Lipid metabolism; bile acid biosynthesis.</text>
</comment>
<comment type="subcellular location">
    <subcellularLocation>
        <location>Endoplasmic reticulum membrane</location>
        <topology>Peripheral membrane protein</topology>
    </subcellularLocation>
    <subcellularLocation>
        <location>Microsome membrane</location>
        <topology>Peripheral membrane protein</topology>
    </subcellularLocation>
</comment>
<comment type="similarity">
    <text evidence="3">Belongs to the cytochrome P450 family.</text>
</comment>
<reference key="1">
    <citation type="journal article" date="1993" name="Arch. Biochem. Biophys.">
        <title>Genomic cloning, sequencing, and analysis of the hamster cholesterol 7 alpha-hydroxylase gene (CYP7).</title>
        <authorList>
            <person name="Crestani M."/>
            <person name="Galli G."/>
            <person name="Chiang J.Y."/>
        </authorList>
    </citation>
    <scope>NUCLEOTIDE SEQUENCE [GENOMIC DNA]</scope>
    <source>
        <tissue>Liver</tissue>
    </source>
</reference>
<name>CP7A1_CRIGR</name>
<accession>P46634</accession>
<sequence length="504" mass="57447">MMTISLIWGIAMVVCCCIWVIFDRRRRKAGEPPLENGLIPYLGCALKFGSNPLEFLRANQRKHGHVFTCKLMGKYVHFITNSLSYHKVLCHGKYFDWKKFHYTTSAKAFGHRSIDPNDGNTTENINNTFTKTLQGDALHSLSEAMMQNLQFVLRPPDLPKSKSDAWVTEGMYAFCYRVMFEAGYLTLFGRDTSKPDTQRVLILNNLNSFKQFDQVFPALVAGLPIHLFKAAHKAREQLAEGLKHENLSVRDQVSELIRLRMFLNDTLSTFDDMEKAKTHLAILWASQANTIPATFWSLFQMIRSPDALRAASEEVNGALQSAGQKLSSEGNAIYLDQIQLNNLPVLDSIIKEALRLSSASLNIRTAKEDFTLHLEDGSYNIRKDDIIALYPQLMHLDPAIYPDPLTFKYDRYLDENKKAKTSFYSNGNKLKYFYMPFGSGATICPGRLFAVQEIKQFLILMLSYFELELVESHVKCPPLDQSRAGLGILPPLNDIEFKYKLKHL</sequence>
<organism>
    <name type="scientific">Cricetulus griseus</name>
    <name type="common">Chinese hamster</name>
    <name type="synonym">Cricetulus barabensis griseus</name>
    <dbReference type="NCBI Taxonomy" id="10029"/>
    <lineage>
        <taxon>Eukaryota</taxon>
        <taxon>Metazoa</taxon>
        <taxon>Chordata</taxon>
        <taxon>Craniata</taxon>
        <taxon>Vertebrata</taxon>
        <taxon>Euteleostomi</taxon>
        <taxon>Mammalia</taxon>
        <taxon>Eutheria</taxon>
        <taxon>Euarchontoglires</taxon>
        <taxon>Glires</taxon>
        <taxon>Rodentia</taxon>
        <taxon>Myomorpha</taxon>
        <taxon>Muroidea</taxon>
        <taxon>Cricetidae</taxon>
        <taxon>Cricetinae</taxon>
        <taxon>Cricetulus</taxon>
    </lineage>
</organism>
<evidence type="ECO:0000250" key="1"/>
<evidence type="ECO:0000250" key="2">
    <source>
        <dbReference type="UniProtKB" id="P22680"/>
    </source>
</evidence>
<evidence type="ECO:0000305" key="3"/>
<dbReference type="EC" id="1.14.14.23" evidence="2"/>
<dbReference type="EMBL" id="L04690">
    <property type="protein sequence ID" value="AAA03751.1"/>
    <property type="molecule type" value="Genomic_DNA"/>
</dbReference>
<dbReference type="PIR" id="S39399">
    <property type="entry name" value="S39399"/>
</dbReference>
<dbReference type="RefSeq" id="NP_001231330.1">
    <property type="nucleotide sequence ID" value="NM_001244401.1"/>
</dbReference>
<dbReference type="SMR" id="P46634"/>
<dbReference type="PaxDb" id="10029-XP_007632636.1"/>
<dbReference type="GeneID" id="100689275"/>
<dbReference type="KEGG" id="cge:100689275"/>
<dbReference type="CTD" id="1581"/>
<dbReference type="eggNOG" id="KOG0684">
    <property type="taxonomic scope" value="Eukaryota"/>
</dbReference>
<dbReference type="OrthoDB" id="6692864at2759"/>
<dbReference type="UniPathway" id="UPA00221"/>
<dbReference type="Proteomes" id="UP000694386">
    <property type="component" value="Unplaced"/>
</dbReference>
<dbReference type="Proteomes" id="UP001108280">
    <property type="component" value="Chromosome 2"/>
</dbReference>
<dbReference type="GO" id="GO:0005789">
    <property type="term" value="C:endoplasmic reticulum membrane"/>
    <property type="evidence" value="ECO:0007669"/>
    <property type="project" value="UniProtKB-SubCell"/>
</dbReference>
<dbReference type="GO" id="GO:0043231">
    <property type="term" value="C:intracellular membrane-bounded organelle"/>
    <property type="evidence" value="ECO:0000250"/>
    <property type="project" value="UniProtKB"/>
</dbReference>
<dbReference type="GO" id="GO:0008123">
    <property type="term" value="F:cholesterol 7-alpha-monooxygenase activity"/>
    <property type="evidence" value="ECO:0000250"/>
    <property type="project" value="UniProtKB"/>
</dbReference>
<dbReference type="GO" id="GO:0020037">
    <property type="term" value="F:heme binding"/>
    <property type="evidence" value="ECO:0007669"/>
    <property type="project" value="InterPro"/>
</dbReference>
<dbReference type="GO" id="GO:0005506">
    <property type="term" value="F:iron ion binding"/>
    <property type="evidence" value="ECO:0007669"/>
    <property type="project" value="InterPro"/>
</dbReference>
<dbReference type="GO" id="GO:0006699">
    <property type="term" value="P:bile acid biosynthetic process"/>
    <property type="evidence" value="ECO:0000250"/>
    <property type="project" value="UniProtKB"/>
</dbReference>
<dbReference type="GO" id="GO:0071397">
    <property type="term" value="P:cellular response to cholesterol"/>
    <property type="evidence" value="ECO:0000250"/>
    <property type="project" value="UniProtKB"/>
</dbReference>
<dbReference type="GO" id="GO:0071333">
    <property type="term" value="P:cellular response to glucose stimulus"/>
    <property type="evidence" value="ECO:0000250"/>
    <property type="project" value="UniProtKB"/>
</dbReference>
<dbReference type="GO" id="GO:0006707">
    <property type="term" value="P:cholesterol catabolic process"/>
    <property type="evidence" value="ECO:0000250"/>
    <property type="project" value="UniProtKB"/>
</dbReference>
<dbReference type="GO" id="GO:0042632">
    <property type="term" value="P:cholesterol homeostasis"/>
    <property type="evidence" value="ECO:0000250"/>
    <property type="project" value="UniProtKB"/>
</dbReference>
<dbReference type="GO" id="GO:0070857">
    <property type="term" value="P:regulation of bile acid biosynthetic process"/>
    <property type="evidence" value="ECO:0000250"/>
    <property type="project" value="UniProtKB"/>
</dbReference>
<dbReference type="CDD" id="cd20631">
    <property type="entry name" value="CYP7A1"/>
    <property type="match status" value="1"/>
</dbReference>
<dbReference type="FunFam" id="1.10.630.10:FF:000034">
    <property type="entry name" value="Cholesterol 7-alpha-monooxygenase"/>
    <property type="match status" value="1"/>
</dbReference>
<dbReference type="Gene3D" id="1.10.630.10">
    <property type="entry name" value="Cytochrome P450"/>
    <property type="match status" value="1"/>
</dbReference>
<dbReference type="InterPro" id="IPR030681">
    <property type="entry name" value="Cholesterol_7a_monooxygenase"/>
</dbReference>
<dbReference type="InterPro" id="IPR050529">
    <property type="entry name" value="CYP450_sterol_14alpha_dmase"/>
</dbReference>
<dbReference type="InterPro" id="IPR001128">
    <property type="entry name" value="Cyt_P450"/>
</dbReference>
<dbReference type="InterPro" id="IPR017972">
    <property type="entry name" value="Cyt_P450_CS"/>
</dbReference>
<dbReference type="InterPro" id="IPR024204">
    <property type="entry name" value="Cyt_P450_CYP7A1-type"/>
</dbReference>
<dbReference type="InterPro" id="IPR002403">
    <property type="entry name" value="Cyt_P450_E_grp-IV"/>
</dbReference>
<dbReference type="InterPro" id="IPR036396">
    <property type="entry name" value="Cyt_P450_sf"/>
</dbReference>
<dbReference type="PANTHER" id="PTHR24304:SF1">
    <property type="entry name" value="CYTOCHROME P450 7A1"/>
    <property type="match status" value="1"/>
</dbReference>
<dbReference type="PANTHER" id="PTHR24304">
    <property type="entry name" value="CYTOCHROME P450 FAMILY 7"/>
    <property type="match status" value="1"/>
</dbReference>
<dbReference type="Pfam" id="PF00067">
    <property type="entry name" value="p450"/>
    <property type="match status" value="1"/>
</dbReference>
<dbReference type="PIRSF" id="PIRSF500625">
    <property type="entry name" value="Cytochrome_CYP7A1"/>
    <property type="match status" value="1"/>
</dbReference>
<dbReference type="PIRSF" id="PIRSF000047">
    <property type="entry name" value="Cytochrome_CYPVIIA1"/>
    <property type="match status" value="1"/>
</dbReference>
<dbReference type="PRINTS" id="PR00465">
    <property type="entry name" value="EP450IV"/>
</dbReference>
<dbReference type="SUPFAM" id="SSF48264">
    <property type="entry name" value="Cytochrome P450"/>
    <property type="match status" value="1"/>
</dbReference>
<dbReference type="PROSITE" id="PS00086">
    <property type="entry name" value="CYTOCHROME_P450"/>
    <property type="match status" value="1"/>
</dbReference>
<protein>
    <recommendedName>
        <fullName>Cholesterol 7-alpha-monooxygenase</fullName>
        <ecNumber evidence="2">1.14.14.23</ecNumber>
    </recommendedName>
    <alternativeName>
        <fullName>CYPVII</fullName>
    </alternativeName>
    <alternativeName>
        <fullName>Cholesterol 7-alpha-hydroxylase</fullName>
    </alternativeName>
    <alternativeName>
        <fullName>Cytochrome P450 7A1</fullName>
    </alternativeName>
</protein>
<proteinExistence type="inferred from homology"/>